<organism>
    <name type="scientific">Emiliania huxleyi</name>
    <name type="common">Coccolithophore</name>
    <name type="synonym">Pontosphaera huxleyi</name>
    <dbReference type="NCBI Taxonomy" id="2903"/>
    <lineage>
        <taxon>Eukaryota</taxon>
        <taxon>Haptista</taxon>
        <taxon>Haptophyta</taxon>
        <taxon>Prymnesiophyceae</taxon>
        <taxon>Isochrysidales</taxon>
        <taxon>Noelaerhabdaceae</taxon>
        <taxon>Emiliania</taxon>
    </lineage>
</organism>
<sequence length="81" mass="8800">MSHSVRVYDTCIGCTQCVRACPCDVLEMVPWDGCKAGQIASAPRAEDCIGCKRCETACPTDFLSVRVYLGSETTRSLGLTY</sequence>
<keyword id="KW-0004">4Fe-4S</keyword>
<keyword id="KW-0150">Chloroplast</keyword>
<keyword id="KW-0249">Electron transport</keyword>
<keyword id="KW-0408">Iron</keyword>
<keyword id="KW-0411">Iron-sulfur</keyword>
<keyword id="KW-0472">Membrane</keyword>
<keyword id="KW-0479">Metal-binding</keyword>
<keyword id="KW-0560">Oxidoreductase</keyword>
<keyword id="KW-0602">Photosynthesis</keyword>
<keyword id="KW-0603">Photosystem I</keyword>
<keyword id="KW-0934">Plastid</keyword>
<keyword id="KW-0677">Repeat</keyword>
<keyword id="KW-0793">Thylakoid</keyword>
<keyword id="KW-0813">Transport</keyword>
<feature type="initiator methionine" description="Removed" evidence="1">
    <location>
        <position position="1"/>
    </location>
</feature>
<feature type="chain" id="PRO_0000276007" description="Photosystem I iron-sulfur center">
    <location>
        <begin position="2"/>
        <end position="81"/>
    </location>
</feature>
<feature type="domain" description="4Fe-4S ferredoxin-type 1" evidence="2">
    <location>
        <begin position="2"/>
        <end position="31"/>
    </location>
</feature>
<feature type="domain" description="4Fe-4S ferredoxin-type 2" evidence="2">
    <location>
        <begin position="39"/>
        <end position="68"/>
    </location>
</feature>
<feature type="binding site" evidence="2">
    <location>
        <position position="11"/>
    </location>
    <ligand>
        <name>[4Fe-4S] cluster</name>
        <dbReference type="ChEBI" id="CHEBI:49883"/>
        <label>1</label>
    </ligand>
</feature>
<feature type="binding site" evidence="2">
    <location>
        <position position="14"/>
    </location>
    <ligand>
        <name>[4Fe-4S] cluster</name>
        <dbReference type="ChEBI" id="CHEBI:49883"/>
        <label>1</label>
    </ligand>
</feature>
<feature type="binding site" evidence="2">
    <location>
        <position position="17"/>
    </location>
    <ligand>
        <name>[4Fe-4S] cluster</name>
        <dbReference type="ChEBI" id="CHEBI:49883"/>
        <label>1</label>
    </ligand>
</feature>
<feature type="binding site" evidence="2">
    <location>
        <position position="21"/>
    </location>
    <ligand>
        <name>[4Fe-4S] cluster</name>
        <dbReference type="ChEBI" id="CHEBI:49883"/>
        <label>2</label>
    </ligand>
</feature>
<feature type="binding site" evidence="2">
    <location>
        <position position="48"/>
    </location>
    <ligand>
        <name>[4Fe-4S] cluster</name>
        <dbReference type="ChEBI" id="CHEBI:49883"/>
        <label>2</label>
    </ligand>
</feature>
<feature type="binding site" evidence="2">
    <location>
        <position position="51"/>
    </location>
    <ligand>
        <name>[4Fe-4S] cluster</name>
        <dbReference type="ChEBI" id="CHEBI:49883"/>
        <label>2</label>
    </ligand>
</feature>
<feature type="binding site" evidence="2">
    <location>
        <position position="54"/>
    </location>
    <ligand>
        <name>[4Fe-4S] cluster</name>
        <dbReference type="ChEBI" id="CHEBI:49883"/>
        <label>2</label>
    </ligand>
</feature>
<feature type="binding site" evidence="2">
    <location>
        <position position="58"/>
    </location>
    <ligand>
        <name>[4Fe-4S] cluster</name>
        <dbReference type="ChEBI" id="CHEBI:49883"/>
        <label>1</label>
    </ligand>
</feature>
<comment type="function">
    <text>Apoprotein for the two 4Fe-4S centers FA and FB of photosystem I (PSI); essential for photochemical activity. FB is the terminal electron acceptor of PSI, donating electrons to ferredoxin. The C-terminus interacts with PsaA/B/D and helps assemble the protein into the PSI complex. Required for binding of PsaD and PsaE to PSI. PSI is a plastocyanin/cytochrome c6-ferredoxin oxidoreductase, converting photonic excitation into a charge separation, which transfers an electron from the donor P700 chlorophyll pair to the spectroscopically characterized acceptors A0, A1, FX, FA and FB in turn.</text>
</comment>
<comment type="catalytic activity">
    <reaction evidence="2">
        <text>reduced [plastocyanin] + hnu + oxidized [2Fe-2S]-[ferredoxin] = oxidized [plastocyanin] + reduced [2Fe-2S]-[ferredoxin]</text>
        <dbReference type="Rhea" id="RHEA:30407"/>
        <dbReference type="Rhea" id="RHEA-COMP:10000"/>
        <dbReference type="Rhea" id="RHEA-COMP:10001"/>
        <dbReference type="Rhea" id="RHEA-COMP:10039"/>
        <dbReference type="Rhea" id="RHEA-COMP:10040"/>
        <dbReference type="ChEBI" id="CHEBI:29036"/>
        <dbReference type="ChEBI" id="CHEBI:30212"/>
        <dbReference type="ChEBI" id="CHEBI:33737"/>
        <dbReference type="ChEBI" id="CHEBI:33738"/>
        <dbReference type="ChEBI" id="CHEBI:49552"/>
        <dbReference type="EC" id="1.97.1.12"/>
    </reaction>
</comment>
<comment type="cofactor">
    <cofactor evidence="2">
        <name>[4Fe-4S] cluster</name>
        <dbReference type="ChEBI" id="CHEBI:49883"/>
    </cofactor>
    <text evidence="2">Binds 2 [4Fe-4S] clusters. Cluster 2 is most probably the spectroscopically characterized electron acceptor FA and cluster 1 is most probably FB.</text>
</comment>
<comment type="subunit">
    <text evidence="2">The eukaryotic PSI reaction center is composed of at least 11 subunits.</text>
</comment>
<comment type="subcellular location">
    <subcellularLocation>
        <location evidence="2">Plastid</location>
        <location evidence="2">Chloroplast thylakoid membrane</location>
        <topology evidence="2">Peripheral membrane protein</topology>
        <orientation evidence="2">Stromal side</orientation>
    </subcellularLocation>
</comment>
<reference key="1">
    <citation type="journal article" date="2006" name="J. Mol. Evol.">
        <title>Rate variation as a function of gene origin in plastid-derived genes of peridinin-containing dinoflagellates.</title>
        <authorList>
            <person name="Bachvaroff T.R."/>
            <person name="Sanchez-Puerta M.V."/>
            <person name="Delwiche C.F."/>
        </authorList>
    </citation>
    <scope>NUCLEOTIDE SEQUENCE [GENOMIC DNA]</scope>
    <source>
        <strain>CCMP373 / CSIRO-CS-57 / BT6</strain>
    </source>
</reference>
<reference key="2">
    <citation type="journal article" date="2005" name="DNA Res.">
        <title>The complete plastid genome sequence of the haptophyte Emiliania huxleyi: a comparison to other plastid genomes.</title>
        <authorList>
            <person name="Sanchez-Puerta M.V."/>
            <person name="Bachvaroff T.R."/>
            <person name="Delwiche C.F."/>
        </authorList>
    </citation>
    <scope>NUCLEOTIDE SEQUENCE [LARGE SCALE GENOMIC DNA]</scope>
    <source>
        <strain>CCMP373 / CSIRO-CS-57 / BT6</strain>
    </source>
</reference>
<proteinExistence type="inferred from homology"/>
<protein>
    <recommendedName>
        <fullName evidence="2">Photosystem I iron-sulfur center</fullName>
        <ecNumber evidence="2">1.97.1.12</ecNumber>
    </recommendedName>
    <alternativeName>
        <fullName evidence="2">9 kDa polypeptide</fullName>
    </alternativeName>
    <alternativeName>
        <fullName evidence="2">PSI-C</fullName>
    </alternativeName>
    <alternativeName>
        <fullName evidence="2">Photosystem I subunit VII</fullName>
    </alternativeName>
    <alternativeName>
        <fullName evidence="2">PsaC</fullName>
    </alternativeName>
</protein>
<geneLocation type="chloroplast"/>
<accession>Q4G3C1</accession>
<gene>
    <name evidence="2" type="primary">psaC</name>
</gene>
<dbReference type="EC" id="1.97.1.12" evidence="2"/>
<dbReference type="EMBL" id="AY704573">
    <property type="protein sequence ID" value="AAU81912.1"/>
    <property type="molecule type" value="Genomic_DNA"/>
</dbReference>
<dbReference type="EMBL" id="AY741371">
    <property type="protein sequence ID" value="AAX13845.1"/>
    <property type="molecule type" value="Genomic_DNA"/>
</dbReference>
<dbReference type="RefSeq" id="YP_277346.1">
    <property type="nucleotide sequence ID" value="NC_007288.1"/>
</dbReference>
<dbReference type="SMR" id="Q4G3C1"/>
<dbReference type="STRING" id="2903.Q4G3C1"/>
<dbReference type="GeneID" id="3562415"/>
<dbReference type="GO" id="GO:0009535">
    <property type="term" value="C:chloroplast thylakoid membrane"/>
    <property type="evidence" value="ECO:0007669"/>
    <property type="project" value="UniProtKB-SubCell"/>
</dbReference>
<dbReference type="GO" id="GO:0009522">
    <property type="term" value="C:photosystem I"/>
    <property type="evidence" value="ECO:0007669"/>
    <property type="project" value="UniProtKB-KW"/>
</dbReference>
<dbReference type="GO" id="GO:0051539">
    <property type="term" value="F:4 iron, 4 sulfur cluster binding"/>
    <property type="evidence" value="ECO:0007669"/>
    <property type="project" value="UniProtKB-KW"/>
</dbReference>
<dbReference type="GO" id="GO:0009055">
    <property type="term" value="F:electron transfer activity"/>
    <property type="evidence" value="ECO:0007669"/>
    <property type="project" value="UniProtKB-UniRule"/>
</dbReference>
<dbReference type="GO" id="GO:0046872">
    <property type="term" value="F:metal ion binding"/>
    <property type="evidence" value="ECO:0007669"/>
    <property type="project" value="UniProtKB-KW"/>
</dbReference>
<dbReference type="GO" id="GO:0016491">
    <property type="term" value="F:oxidoreductase activity"/>
    <property type="evidence" value="ECO:0007669"/>
    <property type="project" value="UniProtKB-KW"/>
</dbReference>
<dbReference type="GO" id="GO:0009773">
    <property type="term" value="P:photosynthetic electron transport in photosystem I"/>
    <property type="evidence" value="ECO:0007669"/>
    <property type="project" value="InterPro"/>
</dbReference>
<dbReference type="FunFam" id="3.30.70.20:FF:000001">
    <property type="entry name" value="Photosystem I iron-sulfur center"/>
    <property type="match status" value="1"/>
</dbReference>
<dbReference type="Gene3D" id="3.30.70.20">
    <property type="match status" value="1"/>
</dbReference>
<dbReference type="HAMAP" id="MF_01303">
    <property type="entry name" value="PSI_PsaC"/>
    <property type="match status" value="1"/>
</dbReference>
<dbReference type="InterPro" id="IPR017896">
    <property type="entry name" value="4Fe4S_Fe-S-bd"/>
</dbReference>
<dbReference type="InterPro" id="IPR017900">
    <property type="entry name" value="4Fe4S_Fe_S_CS"/>
</dbReference>
<dbReference type="InterPro" id="IPR050157">
    <property type="entry name" value="PSI_iron-sulfur_center"/>
</dbReference>
<dbReference type="InterPro" id="IPR017491">
    <property type="entry name" value="PSI_PsaC"/>
</dbReference>
<dbReference type="NCBIfam" id="TIGR03048">
    <property type="entry name" value="PS_I_psaC"/>
    <property type="match status" value="1"/>
</dbReference>
<dbReference type="PANTHER" id="PTHR24960:SF79">
    <property type="entry name" value="PHOTOSYSTEM I IRON-SULFUR CENTER"/>
    <property type="match status" value="1"/>
</dbReference>
<dbReference type="PANTHER" id="PTHR24960">
    <property type="entry name" value="PHOTOSYSTEM I IRON-SULFUR CENTER-RELATED"/>
    <property type="match status" value="1"/>
</dbReference>
<dbReference type="Pfam" id="PF12838">
    <property type="entry name" value="Fer4_7"/>
    <property type="match status" value="1"/>
</dbReference>
<dbReference type="SUPFAM" id="SSF54862">
    <property type="entry name" value="4Fe-4S ferredoxins"/>
    <property type="match status" value="1"/>
</dbReference>
<dbReference type="PROSITE" id="PS00198">
    <property type="entry name" value="4FE4S_FER_1"/>
    <property type="match status" value="2"/>
</dbReference>
<dbReference type="PROSITE" id="PS51379">
    <property type="entry name" value="4FE4S_FER_2"/>
    <property type="match status" value="2"/>
</dbReference>
<name>PSAC_EMIHU</name>
<evidence type="ECO:0000250" key="1"/>
<evidence type="ECO:0000255" key="2">
    <source>
        <dbReference type="HAMAP-Rule" id="MF_01303"/>
    </source>
</evidence>